<accession>Q96PH1</accession>
<accession>B2RBJ4</accession>
<accession>Q08AN2</accession>
<accession>Q08AN3</accession>
<accession>Q8TEQ1</accession>
<accession>Q8TER4</accession>
<accession>Q96PH2</accession>
<accession>Q96PJ8</accession>
<accession>Q96PJ9</accession>
<accession>Q9H6E0</accession>
<accession>Q9HAM8</accession>
<dbReference type="EC" id="1.6.3.-"/>
<dbReference type="EMBL" id="AF325189">
    <property type="protein sequence ID" value="AAK57193.1"/>
    <property type="molecule type" value="mRNA"/>
</dbReference>
<dbReference type="EMBL" id="AF325190">
    <property type="protein sequence ID" value="AAK57194.1"/>
    <property type="molecule type" value="mRNA"/>
</dbReference>
<dbReference type="EMBL" id="AF353088">
    <property type="protein sequence ID" value="AAK57338.1"/>
    <property type="molecule type" value="mRNA"/>
</dbReference>
<dbReference type="EMBL" id="AF353089">
    <property type="protein sequence ID" value="AAK57339.1"/>
    <property type="molecule type" value="mRNA"/>
</dbReference>
<dbReference type="EMBL" id="AK074058">
    <property type="protein sequence ID" value="BAB84884.1"/>
    <property type="molecule type" value="mRNA"/>
</dbReference>
<dbReference type="EMBL" id="AK074071">
    <property type="protein sequence ID" value="BAB84897.1"/>
    <property type="status" value="ALT_INIT"/>
    <property type="molecule type" value="mRNA"/>
</dbReference>
<dbReference type="EMBL" id="AK026011">
    <property type="protein sequence ID" value="BAB15319.1"/>
    <property type="status" value="ALT_INIT"/>
    <property type="molecule type" value="mRNA"/>
</dbReference>
<dbReference type="EMBL" id="AK314689">
    <property type="protein sequence ID" value="BAG37241.1"/>
    <property type="molecule type" value="mRNA"/>
</dbReference>
<dbReference type="EMBL" id="DQ314884">
    <property type="protein sequence ID" value="ABC40743.1"/>
    <property type="molecule type" value="Genomic_DNA"/>
</dbReference>
<dbReference type="EMBL" id="AC027088">
    <property type="status" value="NOT_ANNOTATED_CDS"/>
    <property type="molecule type" value="Genomic_DNA"/>
</dbReference>
<dbReference type="EMBL" id="AC087639">
    <property type="status" value="NOT_ANNOTATED_CDS"/>
    <property type="molecule type" value="Genomic_DNA"/>
</dbReference>
<dbReference type="EMBL" id="CH471082">
    <property type="protein sequence ID" value="EAW77830.1"/>
    <property type="molecule type" value="Genomic_DNA"/>
</dbReference>
<dbReference type="EMBL" id="BC125097">
    <property type="protein sequence ID" value="AAI25098.1"/>
    <property type="molecule type" value="mRNA"/>
</dbReference>
<dbReference type="EMBL" id="BC125098">
    <property type="protein sequence ID" value="AAI25099.1"/>
    <property type="molecule type" value="mRNA"/>
</dbReference>
<dbReference type="EMBL" id="AF317889">
    <property type="protein sequence ID" value="AAG33638.1"/>
    <property type="status" value="ALT_INIT"/>
    <property type="molecule type" value="mRNA"/>
</dbReference>
<dbReference type="CCDS" id="CCDS32276.2">
    <molecule id="Q96PH1-1"/>
</dbReference>
<dbReference type="CCDS" id="CCDS53954.1">
    <molecule id="Q96PH1-3"/>
</dbReference>
<dbReference type="RefSeq" id="NP_001171708.1">
    <molecule id="Q96PH1-3"/>
    <property type="nucleotide sequence ID" value="NM_001184779.2"/>
</dbReference>
<dbReference type="RefSeq" id="NP_001171709.1">
    <molecule id="Q96PH1-6"/>
    <property type="nucleotide sequence ID" value="NM_001184780.1"/>
</dbReference>
<dbReference type="RefSeq" id="NP_078781.3">
    <molecule id="Q96PH1-1"/>
    <property type="nucleotide sequence ID" value="NM_024505.3"/>
</dbReference>
<dbReference type="PDB" id="6SZ5">
    <property type="method" value="X-ray"/>
    <property type="resolution" value="2.23 A"/>
    <property type="chains" value="B/C=19-765"/>
</dbReference>
<dbReference type="PDB" id="8U7Y">
    <property type="method" value="EM"/>
    <property type="resolution" value="4.06 A"/>
    <property type="chains" value="A/B=19-765"/>
</dbReference>
<dbReference type="PDB" id="8U85">
    <property type="method" value="EM"/>
    <property type="resolution" value="3.20 A"/>
    <property type="chains" value="A/C=19-765"/>
</dbReference>
<dbReference type="PDB" id="8U86">
    <property type="method" value="EM"/>
    <property type="resolution" value="3.30 A"/>
    <property type="chains" value="A/C=19-765"/>
</dbReference>
<dbReference type="PDB" id="8U87">
    <property type="method" value="EM"/>
    <property type="resolution" value="3.86 A"/>
    <property type="chains" value="A/C=19-765"/>
</dbReference>
<dbReference type="PDBsum" id="6SZ5"/>
<dbReference type="PDBsum" id="8U7Y"/>
<dbReference type="PDBsum" id="8U85"/>
<dbReference type="PDBsum" id="8U86"/>
<dbReference type="PDBsum" id="8U87"/>
<dbReference type="EMDB" id="EMD-42013"/>
<dbReference type="EMDB" id="EMD-42014"/>
<dbReference type="EMDB" id="EMD-42015"/>
<dbReference type="EMDB" id="EMD-42016"/>
<dbReference type="EMDB" id="EMD-42345"/>
<dbReference type="EMDB" id="EMD-42348"/>
<dbReference type="SMR" id="Q96PH1"/>
<dbReference type="BioGRID" id="122660">
    <property type="interactions" value="47"/>
</dbReference>
<dbReference type="FunCoup" id="Q96PH1">
    <property type="interactions" value="206"/>
</dbReference>
<dbReference type="IntAct" id="Q96PH1">
    <property type="interactions" value="10"/>
</dbReference>
<dbReference type="MINT" id="Q96PH1"/>
<dbReference type="STRING" id="9606.ENSP00000373518"/>
<dbReference type="BindingDB" id="Q96PH1"/>
<dbReference type="ChEMBL" id="CHEMBL1926497"/>
<dbReference type="GuidetoPHARMACOLOGY" id="3005"/>
<dbReference type="PeroxiBase" id="6024">
    <property type="entry name" value="HsNOx05"/>
</dbReference>
<dbReference type="TCDB" id="5.B.1.1.5">
    <property type="family name" value="the phagocyte (gp91(phox)) nadph oxidase family"/>
</dbReference>
<dbReference type="GlyGen" id="Q96PH1">
    <property type="glycosylation" value="1 site"/>
</dbReference>
<dbReference type="iPTMnet" id="Q96PH1"/>
<dbReference type="PhosphoSitePlus" id="Q96PH1"/>
<dbReference type="BioMuta" id="NOX5"/>
<dbReference type="DMDM" id="74717091"/>
<dbReference type="jPOST" id="Q96PH1"/>
<dbReference type="MassIVE" id="Q96PH1"/>
<dbReference type="PaxDb" id="9606-ENSP00000373518"/>
<dbReference type="PeptideAtlas" id="Q96PH1"/>
<dbReference type="ProteomicsDB" id="77694">
    <molecule id="Q96PH1-1"/>
</dbReference>
<dbReference type="ProteomicsDB" id="77695">
    <molecule id="Q96PH1-2"/>
</dbReference>
<dbReference type="ProteomicsDB" id="77696">
    <molecule id="Q96PH1-3"/>
</dbReference>
<dbReference type="ProteomicsDB" id="77697">
    <molecule id="Q96PH1-4"/>
</dbReference>
<dbReference type="ProteomicsDB" id="77698">
    <molecule id="Q96PH1-5"/>
</dbReference>
<dbReference type="ProteomicsDB" id="77699">
    <molecule id="Q96PH1-6"/>
</dbReference>
<dbReference type="Antibodypedia" id="57978">
    <property type="antibodies" value="241 antibodies from 31 providers"/>
</dbReference>
<dbReference type="DNASU" id="79400"/>
<dbReference type="Ensembl" id="ENST00000388866.8">
    <molecule id="Q96PH1-1"/>
    <property type="protein sequence ID" value="ENSP00000373518.3"/>
    <property type="gene ID" value="ENSG00000255346.11"/>
</dbReference>
<dbReference type="Ensembl" id="ENST00000530406.7">
    <molecule id="Q96PH1-3"/>
    <property type="protein sequence ID" value="ENSP00000432440.2"/>
    <property type="gene ID" value="ENSG00000255346.11"/>
</dbReference>
<dbReference type="GeneID" id="79400"/>
<dbReference type="KEGG" id="hsa:134826889"/>
<dbReference type="KEGG" id="hsa:79400"/>
<dbReference type="MANE-Select" id="ENST00000388866.8">
    <property type="protein sequence ID" value="ENSP00000373518.3"/>
    <property type="RefSeq nucleotide sequence ID" value="NM_024505.4"/>
    <property type="RefSeq protein sequence ID" value="NP_078781.3"/>
</dbReference>
<dbReference type="UCSC" id="uc002arp.3">
    <molecule id="Q96PH1-1"/>
    <property type="organism name" value="human"/>
</dbReference>
<dbReference type="AGR" id="HGNC:14874"/>
<dbReference type="CTD" id="134826889"/>
<dbReference type="CTD" id="79400"/>
<dbReference type="DisGeNET" id="79400"/>
<dbReference type="GeneCards" id="NOX5"/>
<dbReference type="HGNC" id="HGNC:14874">
    <property type="gene designation" value="NOX5"/>
</dbReference>
<dbReference type="HPA" id="ENSG00000255346">
    <property type="expression patterns" value="Tissue enriched (lymphoid)"/>
</dbReference>
<dbReference type="HPA" id="ENSG00000290203">
    <property type="expression patterns" value="Not detected"/>
</dbReference>
<dbReference type="MIM" id="606572">
    <property type="type" value="gene"/>
</dbReference>
<dbReference type="neXtProt" id="NX_Q96PH1"/>
<dbReference type="OpenTargets" id="ENSG00000255346"/>
<dbReference type="PharmGKB" id="PA31693"/>
<dbReference type="VEuPathDB" id="HostDB:ENSG00000255346"/>
<dbReference type="eggNOG" id="KOG0039">
    <property type="taxonomic scope" value="Eukaryota"/>
</dbReference>
<dbReference type="GeneTree" id="ENSGT00940000162591"/>
<dbReference type="HOGENOM" id="CLU_009773_0_0_1"/>
<dbReference type="InParanoid" id="Q96PH1"/>
<dbReference type="OMA" id="WFVVPGC"/>
<dbReference type="OrthoDB" id="167398at2759"/>
<dbReference type="PAN-GO" id="Q96PH1">
    <property type="GO annotations" value="2 GO annotations based on evolutionary models"/>
</dbReference>
<dbReference type="PhylomeDB" id="Q96PH1"/>
<dbReference type="TreeFam" id="TF324099"/>
<dbReference type="PathwayCommons" id="Q96PH1"/>
<dbReference type="Reactome" id="R-HSA-3299685">
    <property type="pathway name" value="Detoxification of Reactive Oxygen Species"/>
</dbReference>
<dbReference type="SABIO-RK" id="Q96PH1"/>
<dbReference type="SignaLink" id="Q96PH1"/>
<dbReference type="SIGNOR" id="Q96PH1"/>
<dbReference type="BioGRID-ORCS" id="79400">
    <property type="hits" value="14 hits in 1148 CRISPR screens"/>
</dbReference>
<dbReference type="ChiTaRS" id="NOX5">
    <property type="organism name" value="human"/>
</dbReference>
<dbReference type="GeneWiki" id="NOX5"/>
<dbReference type="GenomeRNAi" id="79400"/>
<dbReference type="Pharos" id="Q96PH1">
    <property type="development level" value="Tchem"/>
</dbReference>
<dbReference type="PRO" id="PR:Q96PH1"/>
<dbReference type="Proteomes" id="UP000005640">
    <property type="component" value="Chromosome 15"/>
</dbReference>
<dbReference type="RNAct" id="Q96PH1">
    <property type="molecule type" value="protein"/>
</dbReference>
<dbReference type="Bgee" id="ENSG00000255346">
    <property type="expression patterns" value="Expressed in oocyte and 141 other cell types or tissues"/>
</dbReference>
<dbReference type="ExpressionAtlas" id="Q96PH1">
    <property type="expression patterns" value="baseline and differential"/>
</dbReference>
<dbReference type="GO" id="GO:0005783">
    <property type="term" value="C:endoplasmic reticulum"/>
    <property type="evidence" value="ECO:0000314"/>
    <property type="project" value="UniProtKB"/>
</dbReference>
<dbReference type="GO" id="GO:0005789">
    <property type="term" value="C:endoplasmic reticulum membrane"/>
    <property type="evidence" value="ECO:0000304"/>
    <property type="project" value="Reactome"/>
</dbReference>
<dbReference type="GO" id="GO:0043020">
    <property type="term" value="C:NADPH oxidase complex"/>
    <property type="evidence" value="ECO:0000318"/>
    <property type="project" value="GO_Central"/>
</dbReference>
<dbReference type="GO" id="GO:0005886">
    <property type="term" value="C:plasma membrane"/>
    <property type="evidence" value="ECO:0000314"/>
    <property type="project" value="UniProtKB"/>
</dbReference>
<dbReference type="GO" id="GO:0005509">
    <property type="term" value="F:calcium ion binding"/>
    <property type="evidence" value="ECO:0007669"/>
    <property type="project" value="InterPro"/>
</dbReference>
<dbReference type="GO" id="GO:0050660">
    <property type="term" value="F:flavin adenine dinucleotide binding"/>
    <property type="evidence" value="ECO:0000303"/>
    <property type="project" value="UniProtKB"/>
</dbReference>
<dbReference type="GO" id="GO:0020037">
    <property type="term" value="F:heme binding"/>
    <property type="evidence" value="ECO:0000303"/>
    <property type="project" value="UniProtKB"/>
</dbReference>
<dbReference type="GO" id="GO:0050661">
    <property type="term" value="F:NADP binding"/>
    <property type="evidence" value="ECO:0000303"/>
    <property type="project" value="UniProtKB"/>
</dbReference>
<dbReference type="GO" id="GO:0015252">
    <property type="term" value="F:proton channel activity"/>
    <property type="evidence" value="ECO:0000314"/>
    <property type="project" value="UniProtKB"/>
</dbReference>
<dbReference type="GO" id="GO:0016175">
    <property type="term" value="F:superoxide-generating NAD(P)H oxidase activity"/>
    <property type="evidence" value="ECO:0000314"/>
    <property type="project" value="UniProtKB"/>
</dbReference>
<dbReference type="GO" id="GO:0106292">
    <property type="term" value="F:superoxide-generating NADPH oxidase activity"/>
    <property type="evidence" value="ECO:0007669"/>
    <property type="project" value="RHEA"/>
</dbReference>
<dbReference type="GO" id="GO:0001525">
    <property type="term" value="P:angiogenesis"/>
    <property type="evidence" value="ECO:0000314"/>
    <property type="project" value="UniProtKB"/>
</dbReference>
<dbReference type="GO" id="GO:0006915">
    <property type="term" value="P:apoptotic process"/>
    <property type="evidence" value="ECO:0000303"/>
    <property type="project" value="UniProtKB"/>
</dbReference>
<dbReference type="GO" id="GO:0061640">
    <property type="term" value="P:cytoskeleton-dependent cytokinesis"/>
    <property type="evidence" value="ECO:0000303"/>
    <property type="project" value="UniProtKB"/>
</dbReference>
<dbReference type="GO" id="GO:0006952">
    <property type="term" value="P:defense response"/>
    <property type="evidence" value="ECO:0000318"/>
    <property type="project" value="GO_Central"/>
</dbReference>
<dbReference type="GO" id="GO:0001935">
    <property type="term" value="P:endothelial cell proliferation"/>
    <property type="evidence" value="ECO:0000314"/>
    <property type="project" value="UniProtKB"/>
</dbReference>
<dbReference type="GO" id="GO:0001819">
    <property type="term" value="P:positive regulation of cytokine production"/>
    <property type="evidence" value="ECO:0000303"/>
    <property type="project" value="UniProtKB"/>
</dbReference>
<dbReference type="GO" id="GO:2000379">
    <property type="term" value="P:positive regulation of reactive oxygen species metabolic process"/>
    <property type="evidence" value="ECO:0000314"/>
    <property type="project" value="UniProtKB"/>
</dbReference>
<dbReference type="GO" id="GO:1902600">
    <property type="term" value="P:proton transmembrane transport"/>
    <property type="evidence" value="ECO:0000314"/>
    <property type="project" value="UniProtKB"/>
</dbReference>
<dbReference type="GO" id="GO:0043012">
    <property type="term" value="P:regulation of fusion of sperm to egg plasma membrane"/>
    <property type="evidence" value="ECO:0000303"/>
    <property type="project" value="UniProtKB"/>
</dbReference>
<dbReference type="GO" id="GO:0042554">
    <property type="term" value="P:superoxide anion generation"/>
    <property type="evidence" value="ECO:0000314"/>
    <property type="project" value="UniProtKB"/>
</dbReference>
<dbReference type="CDD" id="cd00051">
    <property type="entry name" value="EFh"/>
    <property type="match status" value="2"/>
</dbReference>
<dbReference type="CDD" id="cd06186">
    <property type="entry name" value="NOX_Duox_like_FAD_NADP"/>
    <property type="match status" value="1"/>
</dbReference>
<dbReference type="FunFam" id="2.40.30.10:FF:000056">
    <property type="entry name" value="NADPH oxidase 5"/>
    <property type="match status" value="1"/>
</dbReference>
<dbReference type="FunFam" id="1.10.238.10:FF:000210">
    <property type="entry name" value="NADPH oxidase 5 isoform X2"/>
    <property type="match status" value="1"/>
</dbReference>
<dbReference type="FunFam" id="3.40.50.80:FF:000012">
    <property type="entry name" value="NADPH oxidase, isoform B"/>
    <property type="match status" value="1"/>
</dbReference>
<dbReference type="Gene3D" id="1.10.238.10">
    <property type="entry name" value="EF-hand"/>
    <property type="match status" value="1"/>
</dbReference>
<dbReference type="Gene3D" id="3.40.50.80">
    <property type="entry name" value="Nucleotide-binding domain of ferredoxin-NADP reductase (FNR) module"/>
    <property type="match status" value="1"/>
</dbReference>
<dbReference type="Gene3D" id="2.40.30.10">
    <property type="entry name" value="Translation factors"/>
    <property type="match status" value="1"/>
</dbReference>
<dbReference type="InterPro" id="IPR011992">
    <property type="entry name" value="EF-hand-dom_pair"/>
</dbReference>
<dbReference type="InterPro" id="IPR018247">
    <property type="entry name" value="EF_Hand_1_Ca_BS"/>
</dbReference>
<dbReference type="InterPro" id="IPR002048">
    <property type="entry name" value="EF_hand_dom"/>
</dbReference>
<dbReference type="InterPro" id="IPR013112">
    <property type="entry name" value="FAD-bd_8"/>
</dbReference>
<dbReference type="InterPro" id="IPR017927">
    <property type="entry name" value="FAD-bd_FR_type"/>
</dbReference>
<dbReference type="InterPro" id="IPR013130">
    <property type="entry name" value="Fe3_Rdtase_TM_dom"/>
</dbReference>
<dbReference type="InterPro" id="IPR013121">
    <property type="entry name" value="Fe_red_NAD-bd_6"/>
</dbReference>
<dbReference type="InterPro" id="IPR039261">
    <property type="entry name" value="FNR_nucleotide-bd"/>
</dbReference>
<dbReference type="InterPro" id="IPR050369">
    <property type="entry name" value="RBOH/FRE"/>
</dbReference>
<dbReference type="InterPro" id="IPR017938">
    <property type="entry name" value="Riboflavin_synthase-like_b-brl"/>
</dbReference>
<dbReference type="PANTHER" id="PTHR11972">
    <property type="entry name" value="NADPH OXIDASE"/>
    <property type="match status" value="1"/>
</dbReference>
<dbReference type="PANTHER" id="PTHR11972:SF58">
    <property type="entry name" value="NADPH OXIDASE 5"/>
    <property type="match status" value="1"/>
</dbReference>
<dbReference type="Pfam" id="PF13202">
    <property type="entry name" value="EF-hand_5"/>
    <property type="match status" value="1"/>
</dbReference>
<dbReference type="Pfam" id="PF13405">
    <property type="entry name" value="EF-hand_6"/>
    <property type="match status" value="1"/>
</dbReference>
<dbReference type="Pfam" id="PF08022">
    <property type="entry name" value="FAD_binding_8"/>
    <property type="match status" value="1"/>
</dbReference>
<dbReference type="Pfam" id="PF01794">
    <property type="entry name" value="Ferric_reduct"/>
    <property type="match status" value="1"/>
</dbReference>
<dbReference type="Pfam" id="PF08030">
    <property type="entry name" value="NAD_binding_6"/>
    <property type="match status" value="1"/>
</dbReference>
<dbReference type="SFLD" id="SFLDS00052">
    <property type="entry name" value="Ferric_Reductase_Domain"/>
    <property type="match status" value="1"/>
</dbReference>
<dbReference type="SFLD" id="SFLDG01168">
    <property type="entry name" value="Ferric_reductase_subgroup_(FRE"/>
    <property type="match status" value="1"/>
</dbReference>
<dbReference type="SFLD" id="SFLDG01169">
    <property type="entry name" value="NADPH_oxidase_subgroup_(NOX)"/>
    <property type="match status" value="1"/>
</dbReference>
<dbReference type="SMART" id="SM00054">
    <property type="entry name" value="EFh"/>
    <property type="match status" value="2"/>
</dbReference>
<dbReference type="SUPFAM" id="SSF47473">
    <property type="entry name" value="EF-hand"/>
    <property type="match status" value="1"/>
</dbReference>
<dbReference type="SUPFAM" id="SSF52343">
    <property type="entry name" value="Ferredoxin reductase-like, C-terminal NADP-linked domain"/>
    <property type="match status" value="1"/>
</dbReference>
<dbReference type="SUPFAM" id="SSF63380">
    <property type="entry name" value="Riboflavin synthase domain-like"/>
    <property type="match status" value="1"/>
</dbReference>
<dbReference type="PROSITE" id="PS00018">
    <property type="entry name" value="EF_HAND_1"/>
    <property type="match status" value="2"/>
</dbReference>
<dbReference type="PROSITE" id="PS50222">
    <property type="entry name" value="EF_HAND_2"/>
    <property type="match status" value="3"/>
</dbReference>
<dbReference type="PROSITE" id="PS51384">
    <property type="entry name" value="FAD_FR"/>
    <property type="match status" value="1"/>
</dbReference>
<keyword id="KW-0002">3D-structure</keyword>
<keyword id="KW-0025">Alternative splicing</keyword>
<keyword id="KW-0037">Angiogenesis</keyword>
<keyword id="KW-0106">Calcium</keyword>
<keyword id="KW-1003">Cell membrane</keyword>
<keyword id="KW-0249">Electron transport</keyword>
<keyword id="KW-0256">Endoplasmic reticulum</keyword>
<keyword id="KW-0274">FAD</keyword>
<keyword id="KW-0285">Flavoprotein</keyword>
<keyword id="KW-0407">Ion channel</keyword>
<keyword id="KW-0406">Ion transport</keyword>
<keyword id="KW-0472">Membrane</keyword>
<keyword id="KW-0479">Metal-binding</keyword>
<keyword id="KW-0521">NADP</keyword>
<keyword id="KW-0560">Oxidoreductase</keyword>
<keyword id="KW-1267">Proteomics identification</keyword>
<keyword id="KW-1185">Reference proteome</keyword>
<keyword id="KW-0677">Repeat</keyword>
<keyword id="KW-0812">Transmembrane</keyword>
<keyword id="KW-1133">Transmembrane helix</keyword>
<keyword id="KW-0813">Transport</keyword>
<protein>
    <recommendedName>
        <fullName>NADPH oxidase 5</fullName>
        <ecNumber>1.6.3.-</ecNumber>
    </recommendedName>
</protein>
<evidence type="ECO:0000255" key="1"/>
<evidence type="ECO:0000255" key="2">
    <source>
        <dbReference type="PROSITE-ProRule" id="PRU00448"/>
    </source>
</evidence>
<evidence type="ECO:0000255" key="3">
    <source>
        <dbReference type="PROSITE-ProRule" id="PRU00716"/>
    </source>
</evidence>
<evidence type="ECO:0000256" key="4">
    <source>
        <dbReference type="SAM" id="MobiDB-lite"/>
    </source>
</evidence>
<evidence type="ECO:0000269" key="5">
    <source>
    </source>
</evidence>
<evidence type="ECO:0000269" key="6">
    <source>
    </source>
</evidence>
<evidence type="ECO:0000269" key="7">
    <source>
    </source>
</evidence>
<evidence type="ECO:0000269" key="8">
    <source>
    </source>
</evidence>
<evidence type="ECO:0000269" key="9">
    <source>
    </source>
</evidence>
<evidence type="ECO:0000269" key="10">
    <source>
    </source>
</evidence>
<evidence type="ECO:0000269" key="11">
    <source>
    </source>
</evidence>
<evidence type="ECO:0000269" key="12">
    <source>
    </source>
</evidence>
<evidence type="ECO:0000269" key="13">
    <source>
    </source>
</evidence>
<evidence type="ECO:0000269" key="14">
    <source>
    </source>
</evidence>
<evidence type="ECO:0000269" key="15">
    <source>
    </source>
</evidence>
<evidence type="ECO:0000269" key="16">
    <source>
    </source>
</evidence>
<evidence type="ECO:0000269" key="17">
    <source>
    </source>
</evidence>
<evidence type="ECO:0000269" key="18">
    <source>
    </source>
</evidence>
<evidence type="ECO:0000269" key="19">
    <source>
    </source>
</evidence>
<evidence type="ECO:0000303" key="20">
    <source>
    </source>
</evidence>
<evidence type="ECO:0000303" key="21">
    <source>
    </source>
</evidence>
<evidence type="ECO:0000303" key="22">
    <source>
    </source>
</evidence>
<evidence type="ECO:0000303" key="23">
    <source ref="2"/>
</evidence>
<evidence type="ECO:0000305" key="24"/>
<evidence type="ECO:0000305" key="25">
    <source>
    </source>
</evidence>
<evidence type="ECO:0000305" key="26">
    <source>
    </source>
</evidence>
<evidence type="ECO:0000305" key="27">
    <source>
    </source>
</evidence>
<evidence type="ECO:0000305" key="28">
    <source>
    </source>
</evidence>
<evidence type="ECO:0000312" key="29">
    <source>
        <dbReference type="HGNC" id="HGNC:14874"/>
    </source>
</evidence>
<evidence type="ECO:0007744" key="30">
    <source>
        <dbReference type="PDB" id="6SZ5"/>
    </source>
</evidence>
<evidence type="ECO:0007829" key="31">
    <source>
        <dbReference type="PDB" id="6SZ5"/>
    </source>
</evidence>
<evidence type="ECO:0007829" key="32">
    <source>
        <dbReference type="PDB" id="8U85"/>
    </source>
</evidence>
<evidence type="ECO:0007829" key="33">
    <source>
        <dbReference type="PDB" id="8U86"/>
    </source>
</evidence>
<name>NOX5_HUMAN</name>
<proteinExistence type="evidence at protein level"/>
<sequence>MNTSGDPAQTGPEGCRGTMSAEEDARWLRWVTQQFKTIAGEDGEISLQEFKAALHVKESFFAERFFALFDSDRSGTITLQELQEALTLLIHGSPMDKLKFLFQVYDIDVCARQGASAGTEWGAGAGPHWASSPLGTGSGSIDPDELRTVLQSCLRESAISLPDEKLDQLTLALFESADADGNGAITFEELRDELQRFPGVMENLTISAAHWLTAPAPRPRPRRPRQLTRAYWHNHRSQLFCLATYAGLHVLLFGLAASAHRDLGASVMVAKGCGQCLNFDCSFIAVLMLRRCLTWLRATWLAQVLPLDQNIQFHQLMGYVVVGLSLVHTVAHTVNFVLQAQAEASPFQFWELLLTTRPGIGWVHGSASPTGVALLLLLLLMFICSSSCIRRSGHFEVFYWTHLSYLLVWLLLIFHGPNFWKWLLVPGILFFLEKAIGLAVSRMAAVCIMEVNLLPSKVTHLLIKRPPFFHYRPGDYLYLNIPTIARYEWHPFTISSAPEQKDTIWLHIRSQGQWTNRLYESFKASDPLGRGSKRLSRSVTMRKSQRSSKGSEILLEKHKFCNIKCYIDGPYGTPTRRIFASEHAVLIGAGIGITPFASILQSIMYRHQKRKHTCPSCQHSWIEGVQDNMKLHKVDFIWINRDQRSFEWFVSLLTKLEMDQAEEAQYGRFLELHMYMTSALGKNDMKAIGLQMALDLLANKEKKDSITGLQTRTQPGRPDWSKVFQKVAAEKKGKVQVFFCGSPALAKVLKGHCEKFGFRFFQENF</sequence>
<gene>
    <name evidence="29" type="primary">NOX5</name>
</gene>
<organism>
    <name type="scientific">Homo sapiens</name>
    <name type="common">Human</name>
    <dbReference type="NCBI Taxonomy" id="9606"/>
    <lineage>
        <taxon>Eukaryota</taxon>
        <taxon>Metazoa</taxon>
        <taxon>Chordata</taxon>
        <taxon>Craniata</taxon>
        <taxon>Vertebrata</taxon>
        <taxon>Euteleostomi</taxon>
        <taxon>Mammalia</taxon>
        <taxon>Eutheria</taxon>
        <taxon>Euarchontoglires</taxon>
        <taxon>Primates</taxon>
        <taxon>Haplorrhini</taxon>
        <taxon>Catarrhini</taxon>
        <taxon>Hominidae</taxon>
        <taxon>Homo</taxon>
    </lineage>
</organism>
<reference key="1">
    <citation type="journal article" date="2001" name="J. Biol. Chem.">
        <title>A Ca(2+)-activated NADPH oxidase in testis, spleen, and lymph nodes.</title>
        <authorList>
            <person name="Banfi B."/>
            <person name="Molnar G."/>
            <person name="Maturana A."/>
            <person name="Steger K."/>
            <person name="Hegedus B."/>
            <person name="Demaurex N."/>
            <person name="Krause K.-H."/>
        </authorList>
    </citation>
    <scope>NUCLEOTIDE SEQUENCE [MRNA] (ISOFORMS V1; V2; V3 AND V4)</scope>
    <scope>FUNCTION (ISOFORM V2)</scope>
    <scope>TISSUE SPECIFICITY</scope>
    <scope>CATALYTIC ACTIVITY (ISOFORM V2)</scope>
    <source>
        <tissue>Spleen</tissue>
        <tissue>Testis</tissue>
    </source>
</reference>
<reference key="2">
    <citation type="submission" date="2002-01" db="EMBL/GenBank/DDBJ databases">
        <title>The nucleotide sequence of a long cDNA clone isolated from human spleen.</title>
        <authorList>
            <person name="Jikuya H."/>
            <person name="Takano J."/>
            <person name="Nomura N."/>
            <person name="Kikuno R."/>
            <person name="Nagase T."/>
            <person name="Ohara O."/>
        </authorList>
    </citation>
    <scope>NUCLEOTIDE SEQUENCE [LARGE SCALE MRNA] (ISOFORM V5)</scope>
    <scope>NUCLEOTIDE SEQUENCE [LARGE SCALE MRNA] OF 98-765 (ISOFORMS V3/V4)</scope>
    <source>
        <tissue>Spleen</tissue>
    </source>
</reference>
<reference key="3">
    <citation type="journal article" date="2004" name="Nat. Genet.">
        <title>Complete sequencing and characterization of 21,243 full-length human cDNAs.</title>
        <authorList>
            <person name="Ota T."/>
            <person name="Suzuki Y."/>
            <person name="Nishikawa T."/>
            <person name="Otsuki T."/>
            <person name="Sugiyama T."/>
            <person name="Irie R."/>
            <person name="Wakamatsu A."/>
            <person name="Hayashi K."/>
            <person name="Sato H."/>
            <person name="Nagai K."/>
            <person name="Kimura K."/>
            <person name="Makita H."/>
            <person name="Sekine M."/>
            <person name="Obayashi M."/>
            <person name="Nishi T."/>
            <person name="Shibahara T."/>
            <person name="Tanaka T."/>
            <person name="Ishii S."/>
            <person name="Yamamoto J."/>
            <person name="Saito K."/>
            <person name="Kawai Y."/>
            <person name="Isono Y."/>
            <person name="Nakamura Y."/>
            <person name="Nagahari K."/>
            <person name="Murakami K."/>
            <person name="Yasuda T."/>
            <person name="Iwayanagi T."/>
            <person name="Wagatsuma M."/>
            <person name="Shiratori A."/>
            <person name="Sudo H."/>
            <person name="Hosoiri T."/>
            <person name="Kaku Y."/>
            <person name="Kodaira H."/>
            <person name="Kondo H."/>
            <person name="Sugawara M."/>
            <person name="Takahashi M."/>
            <person name="Kanda K."/>
            <person name="Yokoi T."/>
            <person name="Furuya T."/>
            <person name="Kikkawa E."/>
            <person name="Omura Y."/>
            <person name="Abe K."/>
            <person name="Kamihara K."/>
            <person name="Katsuta N."/>
            <person name="Sato K."/>
            <person name="Tanikawa M."/>
            <person name="Yamazaki M."/>
            <person name="Ninomiya K."/>
            <person name="Ishibashi T."/>
            <person name="Yamashita H."/>
            <person name="Murakawa K."/>
            <person name="Fujimori K."/>
            <person name="Tanai H."/>
            <person name="Kimata M."/>
            <person name="Watanabe M."/>
            <person name="Hiraoka S."/>
            <person name="Chiba Y."/>
            <person name="Ishida S."/>
            <person name="Ono Y."/>
            <person name="Takiguchi S."/>
            <person name="Watanabe S."/>
            <person name="Yosida M."/>
            <person name="Hotuta T."/>
            <person name="Kusano J."/>
            <person name="Kanehori K."/>
            <person name="Takahashi-Fujii A."/>
            <person name="Hara H."/>
            <person name="Tanase T.-O."/>
            <person name="Nomura Y."/>
            <person name="Togiya S."/>
            <person name="Komai F."/>
            <person name="Hara R."/>
            <person name="Takeuchi K."/>
            <person name="Arita M."/>
            <person name="Imose N."/>
            <person name="Musashino K."/>
            <person name="Yuuki H."/>
            <person name="Oshima A."/>
            <person name="Sasaki N."/>
            <person name="Aotsuka S."/>
            <person name="Yoshikawa Y."/>
            <person name="Matsunawa H."/>
            <person name="Ichihara T."/>
            <person name="Shiohata N."/>
            <person name="Sano S."/>
            <person name="Moriya S."/>
            <person name="Momiyama H."/>
            <person name="Satoh N."/>
            <person name="Takami S."/>
            <person name="Terashima Y."/>
            <person name="Suzuki O."/>
            <person name="Nakagawa S."/>
            <person name="Senoh A."/>
            <person name="Mizoguchi H."/>
            <person name="Goto Y."/>
            <person name="Shimizu F."/>
            <person name="Wakebe H."/>
            <person name="Hishigaki H."/>
            <person name="Watanabe T."/>
            <person name="Sugiyama A."/>
            <person name="Takemoto M."/>
            <person name="Kawakami B."/>
            <person name="Yamazaki M."/>
            <person name="Watanabe K."/>
            <person name="Kumagai A."/>
            <person name="Itakura S."/>
            <person name="Fukuzumi Y."/>
            <person name="Fujimori Y."/>
            <person name="Komiyama M."/>
            <person name="Tashiro H."/>
            <person name="Tanigami A."/>
            <person name="Fujiwara T."/>
            <person name="Ono T."/>
            <person name="Yamada K."/>
            <person name="Fujii Y."/>
            <person name="Ozaki K."/>
            <person name="Hirao M."/>
            <person name="Ohmori Y."/>
            <person name="Kawabata A."/>
            <person name="Hikiji T."/>
            <person name="Kobatake N."/>
            <person name="Inagaki H."/>
            <person name="Ikema Y."/>
            <person name="Okamoto S."/>
            <person name="Okitani R."/>
            <person name="Kawakami T."/>
            <person name="Noguchi S."/>
            <person name="Itoh T."/>
            <person name="Shigeta K."/>
            <person name="Senba T."/>
            <person name="Matsumura K."/>
            <person name="Nakajima Y."/>
            <person name="Mizuno T."/>
            <person name="Morinaga M."/>
            <person name="Sasaki M."/>
            <person name="Togashi T."/>
            <person name="Oyama M."/>
            <person name="Hata H."/>
            <person name="Watanabe M."/>
            <person name="Komatsu T."/>
            <person name="Mizushima-Sugano J."/>
            <person name="Satoh T."/>
            <person name="Shirai Y."/>
            <person name="Takahashi Y."/>
            <person name="Nakagawa K."/>
            <person name="Okumura K."/>
            <person name="Nagase T."/>
            <person name="Nomura N."/>
            <person name="Kikuchi H."/>
            <person name="Masuho Y."/>
            <person name="Yamashita R."/>
            <person name="Nakai K."/>
            <person name="Yada T."/>
            <person name="Nakamura Y."/>
            <person name="Ohara O."/>
            <person name="Isogai T."/>
            <person name="Sugano S."/>
        </authorList>
    </citation>
    <scope>NUCLEOTIDE SEQUENCE [LARGE SCALE MRNA] (ISOFORM V4)</scope>
    <scope>NUCLEOTIDE SEQUENCE [LARGE SCALE MRNA] OF 159-765 (ISOFORMS V1/V2/V3/V4/V6)</scope>
    <source>
        <tissue>Kidney epithelium</tissue>
        <tissue>Spleen</tissue>
    </source>
</reference>
<reference key="4">
    <citation type="submission" date="2005-12" db="EMBL/GenBank/DDBJ databases">
        <authorList>
            <consortium name="NHLBI resequencing and genotyping service (RS&amp;G)"/>
        </authorList>
    </citation>
    <scope>NUCLEOTIDE SEQUENCE [GENOMIC DNA] (ISOFORM V5)</scope>
</reference>
<reference key="5">
    <citation type="journal article" date="2006" name="Nature">
        <title>Analysis of the DNA sequence and duplication history of human chromosome 15.</title>
        <authorList>
            <person name="Zody M.C."/>
            <person name="Garber M."/>
            <person name="Sharpe T."/>
            <person name="Young S.K."/>
            <person name="Rowen L."/>
            <person name="O'Neill K."/>
            <person name="Whittaker C.A."/>
            <person name="Kamal M."/>
            <person name="Chang J.L."/>
            <person name="Cuomo C.A."/>
            <person name="Dewar K."/>
            <person name="FitzGerald M.G."/>
            <person name="Kodira C.D."/>
            <person name="Madan A."/>
            <person name="Qin S."/>
            <person name="Yang X."/>
            <person name="Abbasi N."/>
            <person name="Abouelleil A."/>
            <person name="Arachchi H.M."/>
            <person name="Baradarani L."/>
            <person name="Birditt B."/>
            <person name="Bloom S."/>
            <person name="Bloom T."/>
            <person name="Borowsky M.L."/>
            <person name="Burke J."/>
            <person name="Butler J."/>
            <person name="Cook A."/>
            <person name="DeArellano K."/>
            <person name="DeCaprio D."/>
            <person name="Dorris L. III"/>
            <person name="Dors M."/>
            <person name="Eichler E.E."/>
            <person name="Engels R."/>
            <person name="Fahey J."/>
            <person name="Fleetwood P."/>
            <person name="Friedman C."/>
            <person name="Gearin G."/>
            <person name="Hall J.L."/>
            <person name="Hensley G."/>
            <person name="Johnson E."/>
            <person name="Jones C."/>
            <person name="Kamat A."/>
            <person name="Kaur A."/>
            <person name="Locke D.P."/>
            <person name="Madan A."/>
            <person name="Munson G."/>
            <person name="Jaffe D.B."/>
            <person name="Lui A."/>
            <person name="Macdonald P."/>
            <person name="Mauceli E."/>
            <person name="Naylor J.W."/>
            <person name="Nesbitt R."/>
            <person name="Nicol R."/>
            <person name="O'Leary S.B."/>
            <person name="Ratcliffe A."/>
            <person name="Rounsley S."/>
            <person name="She X."/>
            <person name="Sneddon K.M.B."/>
            <person name="Stewart S."/>
            <person name="Sougnez C."/>
            <person name="Stone S.M."/>
            <person name="Topham K."/>
            <person name="Vincent D."/>
            <person name="Wang S."/>
            <person name="Zimmer A.R."/>
            <person name="Birren B.W."/>
            <person name="Hood L."/>
            <person name="Lander E.S."/>
            <person name="Nusbaum C."/>
        </authorList>
    </citation>
    <scope>NUCLEOTIDE SEQUENCE [LARGE SCALE GENOMIC DNA]</scope>
</reference>
<reference key="6">
    <citation type="submission" date="2005-07" db="EMBL/GenBank/DDBJ databases">
        <authorList>
            <person name="Mural R.J."/>
            <person name="Istrail S."/>
            <person name="Sutton G.G."/>
            <person name="Florea L."/>
            <person name="Halpern A.L."/>
            <person name="Mobarry C.M."/>
            <person name="Lippert R."/>
            <person name="Walenz B."/>
            <person name="Shatkay H."/>
            <person name="Dew I."/>
            <person name="Miller J.R."/>
            <person name="Flanigan M.J."/>
            <person name="Edwards N.J."/>
            <person name="Bolanos R."/>
            <person name="Fasulo D."/>
            <person name="Halldorsson B.V."/>
            <person name="Hannenhalli S."/>
            <person name="Turner R."/>
            <person name="Yooseph S."/>
            <person name="Lu F."/>
            <person name="Nusskern D.R."/>
            <person name="Shue B.C."/>
            <person name="Zheng X.H."/>
            <person name="Zhong F."/>
            <person name="Delcher A.L."/>
            <person name="Huson D.H."/>
            <person name="Kravitz S.A."/>
            <person name="Mouchard L."/>
            <person name="Reinert K."/>
            <person name="Remington K.A."/>
            <person name="Clark A.G."/>
            <person name="Waterman M.S."/>
            <person name="Eichler E.E."/>
            <person name="Adams M.D."/>
            <person name="Hunkapiller M.W."/>
            <person name="Myers E.W."/>
            <person name="Venter J.C."/>
        </authorList>
    </citation>
    <scope>NUCLEOTIDE SEQUENCE [LARGE SCALE GENOMIC DNA]</scope>
</reference>
<reference key="7">
    <citation type="journal article" date="2004" name="Genome Res.">
        <title>The status, quality, and expansion of the NIH full-length cDNA project: the Mammalian Gene Collection (MGC).</title>
        <authorList>
            <consortium name="The MGC Project Team"/>
        </authorList>
    </citation>
    <scope>NUCLEOTIDE SEQUENCE [LARGE SCALE MRNA] (ISOFORMS V2 AND V6)</scope>
</reference>
<reference key="8">
    <citation type="journal article" date="2005" name="J. Biol. Chem.">
        <title>Point mutations in the proline-rich region of p22phox are dominant inhibitors of Nox1- and Nox2-dependent reactive oxygen generation.</title>
        <authorList>
            <person name="Kawahara T."/>
            <person name="Ritsick D."/>
            <person name="Cheng G."/>
            <person name="Lambeth J.D."/>
        </authorList>
    </citation>
    <scope>NUCLEOTIDE SEQUENCE [MRNA] OF 177-765 (ISOFORMS V1/V2/V3/V4/V6)</scope>
    <source>
        <tissue>Spleen</tissue>
    </source>
</reference>
<reference key="9">
    <citation type="journal article" date="2001" name="Gene">
        <title>Homologs of gp91phox: cloning and tissue expression of Nox3, Nox4, and Nox5.</title>
        <authorList>
            <person name="Cheng G."/>
            <person name="Cao Z."/>
            <person name="Xu X."/>
            <person name="van Meir E.G."/>
            <person name="Lambeth J.D."/>
        </authorList>
    </citation>
    <scope>TISSUE SPECIFICITY</scope>
    <scope>DEVELOPMENTAL STAGE</scope>
</reference>
<reference key="10">
    <citation type="journal article" date="2003" name="Am. J. Physiol.">
        <title>NOX5 NAD(P)H oxidase regulates growth and apoptosis in DU 145 prostate cancer cells.</title>
        <authorList>
            <person name="Brar S.S."/>
            <person name="Corbin Z."/>
            <person name="Kennedy T.P."/>
            <person name="Hemendinger R."/>
            <person name="Thornton L."/>
            <person name="Bommarius B."/>
            <person name="Arnold R.S."/>
            <person name="Whorton A.R."/>
            <person name="Sturrock A.B."/>
            <person name="Huecksteadt T.P."/>
            <person name="Quinn M.T."/>
            <person name="Krenitsky K."/>
            <person name="Ardie K.G."/>
            <person name="Lambeth J.D."/>
            <person name="Hoidal J.R."/>
        </authorList>
    </citation>
    <scope>FUNCTION</scope>
    <scope>TISSUE SPECIFICITY</scope>
    <scope>CATALYTIC ACTIVITY</scope>
</reference>
<reference key="11">
    <citation type="journal article" date="2004" name="J. Biol. Chem.">
        <title>Mechanism of Ca2+ activation of the NADPH oxidase 5 (NOX5).</title>
        <authorList>
            <person name="Banfi B."/>
            <person name="Tirone F."/>
            <person name="Durussel I."/>
            <person name="Knisz J."/>
            <person name="Moskwa P."/>
            <person name="Molnar G.Z."/>
            <person name="Krause K.-H."/>
            <person name="Cox J.A."/>
        </authorList>
    </citation>
    <scope>ACTIVITY REGULATION (ISOFORM V2)</scope>
    <scope>COFACTOR (ISOFORM V2)</scope>
    <scope>MUTAGENESIS OF GLU-31 (ISOFORM V2)</scope>
    <scope>BIOPHYSICOCHEMICAL PROPERTIES (ISOFORM V2)</scope>
    <scope>FUNCTION (ISOFORM V2)</scope>
    <scope>CATALYTIC ACTIVITY (ISOFORM V2)</scope>
    <scope>N-TERMINAL REGULATORY EF DOMAIN (ISOFORM V2)</scope>
</reference>
<reference key="12">
    <citation type="journal article" date="2005" name="Circ. Res.">
        <title>NAD(P)H oxidase 4 mediates transforming growth factor-beta1-induced differentiation of cardiac fibroblasts into myofibroblasts.</title>
        <authorList>
            <person name="Cucoranu I."/>
            <person name="Clempus R."/>
            <person name="Dikalova A."/>
            <person name="Phelan P.J."/>
            <person name="Ariyan S."/>
            <person name="Dikalov S."/>
            <person name="Sorescu D."/>
        </authorList>
    </citation>
    <scope>TISSUE SPECIFICITY</scope>
    <scope>INDUCTION</scope>
</reference>
<reference key="13">
    <citation type="journal article" date="2005" name="J. Immunol.">
        <title>Expression and activity of NOX5 in the circulating malignant B cells of hairy cell leukemia.</title>
        <authorList>
            <person name="Kamiguti A.S."/>
            <person name="Serrander L."/>
            <person name="Lin K."/>
            <person name="Harris R.J."/>
            <person name="Cawley J.C."/>
            <person name="Allsup D.J."/>
            <person name="Slupsky J.R."/>
            <person name="Krause K.-H."/>
            <person name="Zuzel M."/>
        </authorList>
    </citation>
    <scope>TISSUE SPECIFICITY</scope>
</reference>
<reference key="14">
    <citation type="journal article" date="2007" name="Biochimie">
        <title>NOX5 is expressed at the plasma membrane and generates superoxide in response to protein kinase C activation.</title>
        <authorList>
            <person name="Serrander L."/>
            <person name="Jaquet V."/>
            <person name="Bedard K."/>
            <person name="Plastre O."/>
            <person name="Hartley O."/>
            <person name="Arnaudeau S."/>
            <person name="Demaurex N."/>
            <person name="Schlegel W."/>
            <person name="Krause K.H."/>
        </authorList>
    </citation>
    <scope>FUNCTION (ISOFORM V2)</scope>
    <scope>CATALYTIC ACTIVITY (ISOFORM V2)</scope>
    <scope>SUBCELLULAR LOCATION (ISOFORM V2)</scope>
    <scope>ACTIVITY REGULATION (ISOFORM V2)</scope>
</reference>
<reference key="15">
    <citation type="journal article" date="2007" name="Free Radic. Biol. Med.">
        <title>NOX5 variants are functionally active in endothelial cells.</title>
        <authorList>
            <person name="BelAiba R.S."/>
            <person name="Djordjevic T."/>
            <person name="Petry A."/>
            <person name="Diemer K."/>
            <person name="Bonello S."/>
            <person name="Banfi B."/>
            <person name="Hess J."/>
            <person name="Pogrebniak A."/>
            <person name="Bickel C."/>
            <person name="Gorlach A."/>
        </authorList>
    </citation>
    <scope>FUNCTION (ISOFORMS V2 AND V5)</scope>
    <scope>TISSUE SPECIFICITY (ISOFORMS V1; V2; V3; V4 AND V5)</scope>
    <scope>SUBCELLULAR LOCATION (ISOFORMS V2 AND V5)</scope>
    <scope>CATALYTIC ACTIVITY (ISOFORMS V2 AND V5)</scope>
</reference>
<reference key="16">
    <citation type="journal article" date="2011" name="Biochemistry">
        <title>Nox5 forms a functional oligomer mediated by self-association of its dehydrogenase domain.</title>
        <authorList>
            <person name="Kawahara T."/>
            <person name="Jackson H.M."/>
            <person name="Smith S.M."/>
            <person name="Simpson P.D."/>
            <person name="Lambeth J.D."/>
        </authorList>
    </citation>
    <scope>FUNCTION (ISOFORM V1)</scope>
    <scope>CATALYTIC ACTIVITY (ISOFORM V1)</scope>
    <scope>SUBUNIT (ISOFORM V1)</scope>
    <scope>MUTAGENESIS OF LEU-277; PRO-567 AND ASP-656 (ISOFORM V1)</scope>
</reference>
<reference key="17">
    <citation type="journal article" date="2011" name="Mol. Pharmacol.">
        <title>Calcium/calmodulin-dependent kinase II mediates the phosphorylation and activation of NADPH oxidase 5.</title>
        <authorList>
            <person name="Pandey D."/>
            <person name="Gratton J.P."/>
            <person name="Rafikov R."/>
            <person name="Black S.M."/>
            <person name="Fulton D.J."/>
        </authorList>
    </citation>
    <scope>FUNCTION (ISOFORM V2)</scope>
    <scope>CATALYTIC ACTIVITY (ISOFORM V2)</scope>
    <scope>PHOSPHORYLATION AT SER-475; THR-494; SER-498; SER-502 AND SER-659 (ISOFORM V2)</scope>
    <scope>MUTAGENESIS OF SER-475; THR-494; SER-498; SER-502 AND SER-659 (ISOFORM V2)</scope>
</reference>
<reference key="18">
    <citation type="journal article" date="2012" name="Am. J. Physiol.">
        <title>Expression and functional significance of NADPH oxidase 5 (Nox5) and its splice variants in human blood vessels.</title>
        <authorList>
            <person name="Pandey D."/>
            <person name="Patel A."/>
            <person name="Patel V."/>
            <person name="Chen F."/>
            <person name="Qian J."/>
            <person name="Wang Y."/>
            <person name="Barman S.A."/>
            <person name="Venema R.C."/>
            <person name="Stepp D.W."/>
            <person name="Rudic R.D."/>
            <person name="Fulton D.J."/>
        </authorList>
    </citation>
    <scope>FUNCTION (ISOFORMS V1 AND V2)</scope>
    <scope>CATALYTIC ACTIVITY (ISOFORMS V1 AND V2)</scope>
    <scope>ABSENCE OF CATALYTIC ACTIVITY (ISOFORMS V3; V4 AND V5)</scope>
    <scope>TISSUE SPECIFICITY (ISOFORMS V1 AND V2)</scope>
    <scope>DOMAIN</scope>
</reference>
<reference key="19">
    <citation type="journal article" date="2012" name="Free Radic. Biol. Med.">
        <title>Nitric oxide reduces NADPH oxidase 5 (Nox5) activity by reversible S-nitrosylation.</title>
        <authorList>
            <person name="Qian J."/>
            <person name="Chen F."/>
            <person name="Kovalenkov Y."/>
            <person name="Pandey D."/>
            <person name="Moseley M.A."/>
            <person name="Foster M.W."/>
            <person name="Black S.M."/>
            <person name="Venema R.C."/>
            <person name="Stepp D.W."/>
            <person name="Fulton D.J."/>
        </authorList>
    </citation>
    <scope>FUNCTION (ISOFORM V2)</scope>
    <scope>CATALYTIC ACTIVITY (ISOFORM V2)</scope>
    <scope>S-NITROSYLATION AT CYS-107; CYS-246; CYS-519 AND CYS-694 (ISOFORM V2)</scope>
    <scope>PHOSPHORYLATION AT SER-490; THR-494 AND SER-498 (ISOFORM V2)</scope>
    <scope>MUTAGENESIS OF CYS-107; CYS-519 AND CYS-694 (ISOFORM V2)</scope>
</reference>
<reference key="20">
    <citation type="journal article" date="2014" name="PLoS ONE">
        <title>Regulation of NADPH oxidase 5 by protein kinase C isoforms.</title>
        <authorList>
            <person name="Chen F."/>
            <person name="Yu Y."/>
            <person name="Haigh S."/>
            <person name="Johnson J."/>
            <person name="Lucas R."/>
            <person name="Stepp D.W."/>
            <person name="Fulton D.J."/>
        </authorList>
    </citation>
    <scope>FUNCTION (ISOFORM V2)</scope>
    <scope>CATALYTIC ACTIVITY (ISOFORM V2)</scope>
    <scope>PHOSPHORYLATION AT SER-490; THR-494 AND SER-498 (ISOFORM V2)</scope>
    <scope>MUTAGENESIS OF SER-490; THR-494 AND SER-498 (ISOFORM V2)</scope>
</reference>
<reference key="21">
    <citation type="journal article" date="2023" name="FEBS Lett.">
        <title>Ca2+ -binding-region-dependent cell surface localization of NADPH oxidase Nox5.</title>
        <authorList>
            <person name="Miyano K."/>
            <person name="Kajikawa M."/>
        </authorList>
    </citation>
    <scope>FUNCTION (ISOFORMS V2 AND V5)</scope>
    <scope>CATALYTIC ACTIVITY (ISOFORMS V2 AND V5)</scope>
    <scope>ACTIVITY REGULATION (ISOFORM V2)</scope>
    <scope>SUBCELLULAR LOCATION (ISOFORM V2)</scope>
    <scope>MUTAGENESIS OF GLU-110; SER-111; ALA-112; ILE-113; SER-114; LEU-115 AND PRO-116 (ISOFORM V2)</scope>
</reference>
<reference evidence="30" key="22">
    <citation type="journal article" date="2020" name="FEBS J.">
        <title>On the mechanism of calcium-dependent activation of NADPH oxidase 5 (NOX5).</title>
        <authorList>
            <person name="Millana Fananas E."/>
            <person name="Todesca S."/>
            <person name="Sicorello A."/>
            <person name="Masino L."/>
            <person name="Pompach P."/>
            <person name="Magnani F."/>
            <person name="Pastore A."/>
            <person name="Mattevi A."/>
        </authorList>
    </citation>
    <scope>X-RAY CRYSTALLOGRAPHY (2.23 ANGSTROMS) OF 674-684 (ISOFORM V2) IN COMPLEX WITH CALMODULIN</scope>
    <scope>N-TERMINAL REGULATORY EF DOMAIN (ISOFORM V2) AND C-TERMINAL CATALYTIC DEHYDROGENASE DOMAIN (ISOFORM V2)</scope>
</reference>
<feature type="chain" id="PRO_0000224995" description="NADPH oxidase 5">
    <location>
        <begin position="1"/>
        <end position="765"/>
    </location>
</feature>
<feature type="topological domain" description="Cytoplasmic" evidence="1">
    <location>
        <begin position="1"/>
        <end position="238"/>
    </location>
</feature>
<feature type="transmembrane region" description="Helical" evidence="1">
    <location>
        <begin position="239"/>
        <end position="259"/>
    </location>
</feature>
<feature type="topological domain" description="Extracellular" evidence="1">
    <location>
        <begin position="260"/>
        <end position="266"/>
    </location>
</feature>
<feature type="transmembrane region" description="Helical" evidence="1">
    <location>
        <begin position="267"/>
        <end position="289"/>
    </location>
</feature>
<feature type="topological domain" description="Cytoplasmic" evidence="1">
    <location>
        <begin position="290"/>
        <end position="317"/>
    </location>
</feature>
<feature type="transmembrane region" description="Helical" evidence="1">
    <location>
        <begin position="318"/>
        <end position="338"/>
    </location>
</feature>
<feature type="topological domain" description="Extracellular" evidence="1">
    <location>
        <begin position="339"/>
        <end position="362"/>
    </location>
</feature>
<feature type="transmembrane region" description="Helical" evidence="1">
    <location>
        <begin position="363"/>
        <end position="383"/>
    </location>
</feature>
<feature type="topological domain" description="Cytoplasmic" evidence="1">
    <location>
        <begin position="384"/>
        <end position="394"/>
    </location>
</feature>
<feature type="transmembrane region" description="Helical" evidence="1">
    <location>
        <begin position="395"/>
        <end position="417"/>
    </location>
</feature>
<feature type="topological domain" description="Extracellular" evidence="1">
    <location>
        <begin position="418"/>
        <end position="434"/>
    </location>
</feature>
<feature type="transmembrane region" description="Helical" evidence="1">
    <location>
        <begin position="435"/>
        <end position="455"/>
    </location>
</feature>
<feature type="topological domain" description="Cytoplasmic" evidence="1">
    <location>
        <begin position="456"/>
        <end position="583"/>
    </location>
</feature>
<feature type="transmembrane region" description="Helical" evidence="1">
    <location>
        <begin position="584"/>
        <end position="604"/>
    </location>
</feature>
<feature type="topological domain" description="Extracellular" evidence="1">
    <location>
        <begin position="605"/>
        <end position="765"/>
    </location>
</feature>
<feature type="domain" description="EF-hand 1" evidence="24">
    <location>
        <begin position="26"/>
        <end position="56"/>
    </location>
</feature>
<feature type="domain" description="EF-hand 2" evidence="2">
    <location>
        <begin position="57"/>
        <end position="92"/>
    </location>
</feature>
<feature type="domain" description="EF-hand 3; atypical; contains an insert of 28 residues" evidence="2">
    <location>
        <begin position="93"/>
        <end position="156"/>
    </location>
</feature>
<feature type="domain" description="EF-hand 4" evidence="2">
    <location>
        <begin position="165"/>
        <end position="200"/>
    </location>
</feature>
<feature type="domain" description="Ferric oxidoreductase">
    <location>
        <begin position="293"/>
        <end position="440"/>
    </location>
</feature>
<feature type="domain" description="FAD-binding FR-type" evidence="3">
    <location>
        <begin position="441"/>
        <end position="577"/>
    </location>
</feature>
<feature type="region of interest" description="Disordered" evidence="4">
    <location>
        <begin position="122"/>
        <end position="141"/>
    </location>
</feature>
<feature type="binding site" evidence="24">
    <location>
        <position position="42"/>
    </location>
    <ligand>
        <name>Ca(2+)</name>
        <dbReference type="ChEBI" id="CHEBI:29108"/>
        <label>1</label>
    </ligand>
</feature>
<feature type="binding site" evidence="24">
    <location>
        <position position="44"/>
    </location>
    <ligand>
        <name>Ca(2+)</name>
        <dbReference type="ChEBI" id="CHEBI:29108"/>
        <label>1</label>
    </ligand>
</feature>
<feature type="binding site" evidence="24">
    <location>
        <position position="49"/>
    </location>
    <ligand>
        <name>Ca(2+)</name>
        <dbReference type="ChEBI" id="CHEBI:29108"/>
        <label>1</label>
    </ligand>
</feature>
<feature type="binding site" evidence="2">
    <location>
        <position position="70"/>
    </location>
    <ligand>
        <name>Ca(2+)</name>
        <dbReference type="ChEBI" id="CHEBI:29108"/>
        <label>2</label>
    </ligand>
</feature>
<feature type="binding site" evidence="2">
    <location>
        <position position="72"/>
    </location>
    <ligand>
        <name>Ca(2+)</name>
        <dbReference type="ChEBI" id="CHEBI:29108"/>
        <label>2</label>
    </ligand>
</feature>
<feature type="binding site" evidence="2">
    <location>
        <position position="74"/>
    </location>
    <ligand>
        <name>Ca(2+)</name>
        <dbReference type="ChEBI" id="CHEBI:29108"/>
        <label>2</label>
    </ligand>
</feature>
<feature type="binding site" evidence="2">
    <location>
        <position position="76"/>
    </location>
    <ligand>
        <name>Ca(2+)</name>
        <dbReference type="ChEBI" id="CHEBI:29108"/>
        <label>2</label>
    </ligand>
</feature>
<feature type="binding site" evidence="2">
    <location>
        <position position="81"/>
    </location>
    <ligand>
        <name>Ca(2+)</name>
        <dbReference type="ChEBI" id="CHEBI:29108"/>
        <label>2</label>
    </ligand>
</feature>
<feature type="binding site" evidence="24">
    <location>
        <position position="106"/>
    </location>
    <ligand>
        <name>Ca(2+)</name>
        <dbReference type="ChEBI" id="CHEBI:29108"/>
        <label>3</label>
    </ligand>
</feature>
<feature type="binding site" evidence="24">
    <location>
        <position position="108"/>
    </location>
    <ligand>
        <name>Ca(2+)</name>
        <dbReference type="ChEBI" id="CHEBI:29108"/>
        <label>3</label>
    </ligand>
</feature>
<feature type="binding site" evidence="24">
    <location>
        <position position="138"/>
    </location>
    <ligand>
        <name>Ca(2+)</name>
        <dbReference type="ChEBI" id="CHEBI:29108"/>
        <label>3</label>
    </ligand>
</feature>
<feature type="binding site" evidence="24">
    <location>
        <position position="140"/>
    </location>
    <ligand>
        <name>Ca(2+)</name>
        <dbReference type="ChEBI" id="CHEBI:29108"/>
        <label>3</label>
    </ligand>
</feature>
<feature type="binding site" evidence="24">
    <location>
        <position position="145"/>
    </location>
    <ligand>
        <name>Ca(2+)</name>
        <dbReference type="ChEBI" id="CHEBI:29108"/>
        <label>3</label>
    </ligand>
</feature>
<feature type="binding site" evidence="2">
    <location>
        <position position="178"/>
    </location>
    <ligand>
        <name>Ca(2+)</name>
        <dbReference type="ChEBI" id="CHEBI:29108"/>
        <label>4</label>
    </ligand>
</feature>
<feature type="binding site" evidence="2">
    <location>
        <position position="180"/>
    </location>
    <ligand>
        <name>Ca(2+)</name>
        <dbReference type="ChEBI" id="CHEBI:29108"/>
        <label>4</label>
    </ligand>
</feature>
<feature type="binding site" evidence="2">
    <location>
        <position position="182"/>
    </location>
    <ligand>
        <name>Ca(2+)</name>
        <dbReference type="ChEBI" id="CHEBI:29108"/>
        <label>4</label>
    </ligand>
</feature>
<feature type="binding site" evidence="2">
    <location>
        <position position="189"/>
    </location>
    <ligand>
        <name>Ca(2+)</name>
        <dbReference type="ChEBI" id="CHEBI:29108"/>
        <label>4</label>
    </ligand>
</feature>
<feature type="splice variant" id="VSP_017326" description="In isoform v5." evidence="23">
    <location>
        <begin position="1"/>
        <end position="200"/>
    </location>
</feature>
<feature type="splice variant" id="VSP_017327" description="In isoform v2 and isoform v4." evidence="20 21 22">
    <location>
        <begin position="1"/>
        <end position="18"/>
    </location>
</feature>
<feature type="splice variant" id="VSP_041619" description="In isoform v6." evidence="22">
    <original>MNTSGDPAQTGPEGCRG</original>
    <variation>MAFVCAGLSD</variation>
    <location>
        <begin position="1"/>
        <end position="17"/>
    </location>
</feature>
<feature type="splice variant" id="VSP_017328" description="In isoform v1, isoform v2 and isoform v6." evidence="20 22">
    <location>
        <begin position="109"/>
        <end position="136"/>
    </location>
</feature>
<feature type="sequence variant" id="VAR_055820" description="In dbSNP:rs2277552.">
    <original>R</original>
    <variation>H</variation>
    <location>
        <position position="576"/>
    </location>
</feature>
<feature type="sequence variant" id="VAR_055821" description="In dbSNP:rs7168025.">
    <original>R</original>
    <variation>G</variation>
    <location>
        <position position="759"/>
    </location>
</feature>
<feature type="sequence conflict" description="In Ref. 8; AAG33638." evidence="24" ref="8">
    <original>A</original>
    <variation>T</variation>
    <location>
        <position position="208"/>
    </location>
</feature>
<feature type="sequence conflict" description="In Ref. 7; AAI25099." evidence="24" ref="7">
    <original>G</original>
    <variation>S</variation>
    <location>
        <position position="272"/>
    </location>
</feature>
<feature type="sequence conflict" description="In Ref. 3; BAG37241." evidence="24" ref="3">
    <original>L</original>
    <variation>P</variation>
    <location>
        <position position="375"/>
    </location>
</feature>
<feature type="sequence conflict" description="In Ref. 2; BAB84884/BAB84897, 3; BAB15319/BAG37241, 6; EAW77830 and 7; AAI25098/AAI25099." evidence="24" ref="2 3 6 7">
    <original>L</original>
    <variation>F</variation>
    <location>
        <position position="380"/>
    </location>
</feature>
<feature type="helix" evidence="32">
    <location>
        <begin position="23"/>
        <end position="35"/>
    </location>
</feature>
<feature type="helix" evidence="32">
    <location>
        <begin position="47"/>
        <end position="53"/>
    </location>
</feature>
<feature type="helix" evidence="32">
    <location>
        <begin position="60"/>
        <end position="69"/>
    </location>
</feature>
<feature type="helix" evidence="32">
    <location>
        <begin position="79"/>
        <end position="90"/>
    </location>
</feature>
<feature type="helix" evidence="32">
    <location>
        <begin position="94"/>
        <end position="105"/>
    </location>
</feature>
<feature type="helix" evidence="32">
    <location>
        <begin position="143"/>
        <end position="152"/>
    </location>
</feature>
<feature type="strand" evidence="32">
    <location>
        <begin position="157"/>
        <end position="159"/>
    </location>
</feature>
<feature type="helix" evidence="32">
    <location>
        <begin position="163"/>
        <end position="177"/>
    </location>
</feature>
<feature type="helix" evidence="32">
    <location>
        <begin position="187"/>
        <end position="196"/>
    </location>
</feature>
<feature type="helix" evidence="32">
    <location>
        <begin position="200"/>
        <end position="203"/>
    </location>
</feature>
<feature type="helix" evidence="32">
    <location>
        <begin position="229"/>
        <end position="259"/>
    </location>
</feature>
<feature type="helix" evidence="32">
    <location>
        <begin position="267"/>
        <end position="286"/>
    </location>
</feature>
<feature type="turn" evidence="32">
    <location>
        <begin position="290"/>
        <end position="292"/>
    </location>
</feature>
<feature type="helix" evidence="32">
    <location>
        <begin position="293"/>
        <end position="296"/>
    </location>
</feature>
<feature type="helix" evidence="32">
    <location>
        <begin position="301"/>
        <end position="304"/>
    </location>
</feature>
<feature type="strand" evidence="32">
    <location>
        <begin position="307"/>
        <end position="309"/>
    </location>
</feature>
<feature type="helix" evidence="32">
    <location>
        <begin position="310"/>
        <end position="340"/>
    </location>
</feature>
<feature type="strand" evidence="32">
    <location>
        <begin position="366"/>
        <end position="368"/>
    </location>
</feature>
<feature type="helix" evidence="32">
    <location>
        <begin position="369"/>
        <end position="383"/>
    </location>
</feature>
<feature type="helix" evidence="32">
    <location>
        <begin position="387"/>
        <end position="391"/>
    </location>
</feature>
<feature type="helix" evidence="32">
    <location>
        <begin position="397"/>
        <end position="402"/>
    </location>
</feature>
<feature type="helix" evidence="32">
    <location>
        <begin position="405"/>
        <end position="413"/>
    </location>
</feature>
<feature type="helix" evidence="32">
    <location>
        <begin position="419"/>
        <end position="436"/>
    </location>
</feature>
<feature type="strand" evidence="32">
    <location>
        <begin position="441"/>
        <end position="444"/>
    </location>
</feature>
<feature type="strand" evidence="32">
    <location>
        <begin position="447"/>
        <end position="454"/>
    </location>
</feature>
<feature type="turn" evidence="32">
    <location>
        <begin position="455"/>
        <end position="457"/>
    </location>
</feature>
<feature type="strand" evidence="32">
    <location>
        <begin position="458"/>
        <end position="464"/>
    </location>
</feature>
<feature type="strand" evidence="32">
    <location>
        <begin position="476"/>
        <end position="479"/>
    </location>
</feature>
<feature type="turn" evidence="32">
    <location>
        <begin position="482"/>
        <end position="484"/>
    </location>
</feature>
<feature type="strand" evidence="32">
    <location>
        <begin position="490"/>
        <end position="494"/>
    </location>
</feature>
<feature type="strand" evidence="32">
    <location>
        <begin position="502"/>
        <end position="509"/>
    </location>
</feature>
<feature type="helix" evidence="32">
    <location>
        <begin position="513"/>
        <end position="524"/>
    </location>
</feature>
<feature type="strand" evidence="32">
    <location>
        <begin position="567"/>
        <end position="571"/>
    </location>
</feature>
<feature type="helix" evidence="32">
    <location>
        <begin position="576"/>
        <end position="579"/>
    </location>
</feature>
<feature type="strand" evidence="32">
    <location>
        <begin position="580"/>
        <end position="589"/>
    </location>
</feature>
<feature type="turn" evidence="32">
    <location>
        <begin position="590"/>
        <end position="593"/>
    </location>
</feature>
<feature type="helix" evidence="32">
    <location>
        <begin position="594"/>
        <end position="609"/>
    </location>
</feature>
<feature type="strand" evidence="33">
    <location>
        <begin position="611"/>
        <end position="613"/>
    </location>
</feature>
<feature type="turn" evidence="32">
    <location>
        <begin position="615"/>
        <end position="617"/>
    </location>
</feature>
<feature type="strand" evidence="33">
    <location>
        <begin position="620"/>
        <end position="622"/>
    </location>
</feature>
<feature type="strand" evidence="32">
    <location>
        <begin position="634"/>
        <end position="639"/>
    </location>
</feature>
<feature type="helix" evidence="32">
    <location>
        <begin position="647"/>
        <end position="659"/>
    </location>
</feature>
<feature type="turn" evidence="32">
    <location>
        <begin position="664"/>
        <end position="666"/>
    </location>
</feature>
<feature type="strand" evidence="32">
    <location>
        <begin position="670"/>
        <end position="675"/>
    </location>
</feature>
<feature type="turn" evidence="32">
    <location>
        <begin position="682"/>
        <end position="685"/>
    </location>
</feature>
<feature type="helix" evidence="32">
    <location>
        <begin position="686"/>
        <end position="695"/>
    </location>
</feature>
<feature type="turn" evidence="32">
    <location>
        <begin position="696"/>
        <end position="700"/>
    </location>
</feature>
<feature type="helix" evidence="32">
    <location>
        <begin position="703"/>
        <end position="705"/>
    </location>
</feature>
<feature type="helix" evidence="32">
    <location>
        <begin position="707"/>
        <end position="710"/>
    </location>
</feature>
<feature type="strand" evidence="32">
    <location>
        <begin position="711"/>
        <end position="714"/>
    </location>
</feature>
<feature type="helix" evidence="31">
    <location>
        <begin position="721"/>
        <end position="728"/>
    </location>
</feature>
<feature type="strand" evidence="32">
    <location>
        <begin position="736"/>
        <end position="741"/>
    </location>
</feature>
<feature type="helix" evidence="32">
    <location>
        <begin position="743"/>
        <end position="756"/>
    </location>
</feature>
<feature type="region of interest" description="C-terminal catalytic dehydrogenase domain" evidence="26">
    <location sequence="Q96PH1-3">
        <begin position="416"/>
        <end position="737"/>
    </location>
</feature>
<feature type="mutagenesis site" description="Loss of activity but no effect on protein levels." evidence="13">
    <original>L</original>
    <variation>R</variation>
    <location sequence="Q96PH1-3">
        <position position="277"/>
    </location>
</feature>
<feature type="mutagenesis site" description="Loss of activity but no effect on protein levels." evidence="13">
    <original>P</original>
    <variation>H</variation>
    <location sequence="Q96PH1-3">
        <position position="567"/>
    </location>
</feature>
<feature type="mutagenesis site" description="Loss of activity but no effect on protein levels." evidence="13">
    <original>D</original>
    <variation>A</variation>
    <location sequence="Q96PH1-3">
        <position position="656"/>
    </location>
</feature>
<feature type="region of interest" description="N-terminal regulatory EF domain" evidence="8 28">
    <location sequence="Q96PH1-4">
        <begin position="1"/>
        <end position="161"/>
    </location>
</feature>
<feature type="region of interest" description="N-terminal lobe of N-terminal regulatory EF domain" evidence="28">
    <location sequence="Q96PH1-4">
        <begin position="1"/>
        <end position="77"/>
    </location>
</feature>
<feature type="region of interest" description="C-terminal lobe of N-terminal regulatory EF domain" evidence="28">
    <location sequence="Q96PH1-4">
        <begin position="78"/>
        <end position="161"/>
    </location>
</feature>
<feature type="region of interest" description="C-terminal catalytic dehydrogenase domain" evidence="28">
    <location sequence="Q96PH1-4">
        <begin position="398"/>
        <end position="719"/>
    </location>
</feature>
<feature type="modified residue" description="S-nitrosocysteine" evidence="15">
    <location sequence="Q96PH1-4">
        <position position="107"/>
    </location>
</feature>
<feature type="modified residue" description="S-nitrosocysteine" evidence="15">
    <location sequence="Q96PH1-4">
        <position position="246"/>
    </location>
</feature>
<feature type="modified residue" description="Phosphoserine; by CaMK2" evidence="14">
    <location sequence="Q96PH1-4">
        <position position="475"/>
    </location>
</feature>
<feature type="modified residue" description="Phosphothreonine; by PKC/PRKCA" evidence="15 17">
    <location sequence="Q96PH1-4">
        <position position="490"/>
    </location>
</feature>
<feature type="modified residue" description="Phosphothreonine; by CaMK2 and PKC/PRKCA" evidence="14 15 17">
    <location sequence="Q96PH1-4">
        <position position="494"/>
    </location>
</feature>
<feature type="modified residue" description="Phosphoserine; by CaMK2 and PKC/PRKCA" evidence="14 15 17">
    <location sequence="Q96PH1-4">
        <position position="498"/>
    </location>
</feature>
<feature type="modified residue" description="Phosphoserine; by CaMK2" evidence="14">
    <location sequence="Q96PH1-4">
        <position position="502"/>
    </location>
</feature>
<feature type="modified residue" description="S-nitrosocysteine" evidence="15">
    <location sequence="Q96PH1-4">
        <position position="519"/>
    </location>
</feature>
<feature type="modified residue" description="Phosphoserine; by CaMK2" evidence="14">
    <location sequence="Q96PH1-4">
        <position position="659"/>
    </location>
</feature>
<feature type="modified residue" description="S-nitrosocysteine" evidence="15">
    <location sequence="Q96PH1-4">
        <position position="694"/>
    </location>
</feature>
<feature type="mutagenesis site" description="Loss of binding of 1 calcium molecule. No effect on catalytic activity." evidence="8">
    <original>E</original>
    <variation>Q</variation>
    <location sequence="Q96PH1-4">
        <position position="31"/>
    </location>
</feature>
<feature type="mutagenesis site" description="Substantial loss of catalytic activity." evidence="15">
    <original>C</original>
    <variation>S</variation>
    <location sequence="Q96PH1-4">
        <position position="107"/>
    </location>
</feature>
<feature type="mutagenesis site" description="No effect on cell membrane localization and catalytic activity." evidence="19">
    <original>E</original>
    <variation>A</variation>
    <location sequence="Q96PH1-4">
        <position position="110"/>
    </location>
</feature>
<feature type="mutagenesis site" description="No effect on cell membrane localization and catalytic activity." evidence="19">
    <original>S</original>
    <variation>A</variation>
    <location sequence="Q96PH1-4">
        <position position="111"/>
    </location>
</feature>
<feature type="mutagenesis site" description="No effect on cell membrane localization and catalytic activity." evidence="19">
    <original>A</original>
    <variation>N</variation>
    <location sequence="Q96PH1-4">
        <position position="112"/>
    </location>
</feature>
<feature type="mutagenesis site" description="Significant reduction in cell membrane localization and catalytic activity. Reduced calcium-dependent interaction between the N-terminal regulatory region and the C-terminal catalytic region." evidence="19">
    <original>I</original>
    <variation>N</variation>
    <location sequence="Q96PH1-4">
        <position position="113"/>
    </location>
</feature>
<feature type="mutagenesis site" description="No effect on cell membrane localization and catalytic activity." evidence="19">
    <original>S</original>
    <variation>A</variation>
    <location sequence="Q96PH1-4">
        <position position="114"/>
    </location>
</feature>
<feature type="mutagenesis site" description="Significant reduction in cell membrane localization and catalytic activity. No effect on calcium-dependent interaction between the N-terminal regulatory region and the C-terminal catalytic region." evidence="19">
    <original>L</original>
    <variation>A</variation>
    <location sequence="Q96PH1-4">
        <position position="115"/>
    </location>
</feature>
<feature type="mutagenesis site" description="No effect on cell membrane localization and catalytic activity." evidence="19">
    <original>P</original>
    <variation>A</variation>
    <location sequence="Q96PH1-4">
        <position position="116"/>
    </location>
</feature>
<feature type="mutagenesis site" description="Loss of CaMK2-mediated activation of its activity." evidence="14">
    <original>S</original>
    <variation>A</variation>
    <location sequence="Q96PH1-4">
        <position position="475"/>
    </location>
</feature>
<feature type="mutagenesis site" description="Loss of PKC/PRKCA-mediated activation of its activity; when associated with A-494 and A-498." evidence="17">
    <original>S</original>
    <variation>A</variation>
    <location sequence="Q96PH1-4">
        <position position="490"/>
    </location>
</feature>
<feature type="mutagenesis site" description="No effect on CaMK2-mediated activation of its activity. Loss of PKC/PRKCA-mediated activation of its activity; when associated with A-490 and A-498." evidence="14 17">
    <original>T</original>
    <variation>A</variation>
    <location sequence="Q96PH1-4">
        <position position="494"/>
    </location>
</feature>
<feature type="mutagenesis site" description="No effect on CaMK2-mediated activation of its activity. Loss of PKC/PRKCA-mediated activation of its activity; when associated with A-490 and A-494." evidence="14 17">
    <original>S</original>
    <variation>A</variation>
    <location sequence="Q96PH1-4">
        <position position="498"/>
    </location>
</feature>
<feature type="mutagenesis site" description="No effect on CaMK2-mediated activation of its activity." evidence="14">
    <original>S</original>
    <variation>A</variation>
    <location sequence="Q96PH1-4">
        <position position="502"/>
    </location>
</feature>
<feature type="mutagenesis site" description="Very significant loss of catalytic activity." evidence="15">
    <original>C</original>
    <variation>S</variation>
    <location sequence="Q96PH1-4">
        <position position="519"/>
    </location>
</feature>
<feature type="mutagenesis site" description="No effect on cell membrane localization but loss of catalytic activity." evidence="19">
    <original>P</original>
    <variation>H</variation>
    <location sequence="Q96PH1-4">
        <position position="549"/>
    </location>
</feature>
<feature type="mutagenesis site" description="No effect on CaMK2-mediated activation of its activity." evidence="14">
    <original>S</original>
    <variation>A</variation>
    <location sequence="Q96PH1-4">
        <position position="659"/>
    </location>
</feature>
<feature type="mutagenesis site" description="Reduced nitrosylation. Very significant loss of catalytic activity." evidence="15">
    <original>C</original>
    <variation>S</variation>
    <location sequence="Q96PH1-4">
        <position position="694"/>
    </location>
</feature>
<comment type="function">
    <text evidence="7">Calcium-dependent NADPH oxidase that catalyzes the generation of superoxide from molecular oxygen utilizing NADPH as an electron donor (PubMed:12686516). May play a role in cell growth and apoptosis (PubMed:12686516).</text>
</comment>
<comment type="function">
    <molecule>Isoform v2</molecule>
    <text evidence="6 8 11 12 14 15 16 17 19">Calcium-dependent NADPH oxidase that catalyzes the generation of superoxide from molecular oxygen utilizing NADPH as an electron donor (PubMed:11483596, PubMed:14982937, PubMed:17275676, PubMed:17587483, PubMed:21642394, PubMed:22387196, PubMed:22427510, PubMed:24505490, PubMed:36653838). Involved in endothelial generation of reactive oxygen species (ROS), proliferation and angiogenesis and contributes to endothelial response to thrombin (PubMed:17275676). Regulates redox-dependent processes in lymphocytes and spermatozoa (PubMed:11483596).</text>
</comment>
<comment type="function">
    <molecule>Isoform v1</molecule>
    <text evidence="13 16">Calcium-dependent NADPH oxidase that catalyzes the generation of superoxide from molecular oxygen utilizing NADPH as an electron donor.</text>
</comment>
<comment type="function">
    <molecule>Isoform v5</molecule>
    <text evidence="11 16 19">This isoform lacks calcium-binding domains and was showed to present a NADPH oxidase activity in a calcium-independent manner (PubMed:17275676, PubMed:36653838). May be involved in endothelial generation of reactive oxygen species (ROS), proliferation and angiogenesis and contribute to endothelial response to thrombin (PubMed:17275676). However another study showed an absence of oxidase activity (PubMed:22427510). Subject to rapid degradation (PubMed:36653838).</text>
</comment>
<comment type="function">
    <molecule>Isoform v3</molecule>
    <text evidence="16">Lacks calcium-dependent NADPH oxidase activity.</text>
</comment>
<comment type="function">
    <molecule>Isoform v4</molecule>
    <text evidence="16">Lacks calcium-dependent NADPH oxidase activity.</text>
</comment>
<comment type="catalytic activity">
    <reaction evidence="7">
        <text>NADPH + 2 O2 = 2 superoxide + NADP(+) + H(+)</text>
        <dbReference type="Rhea" id="RHEA:63180"/>
        <dbReference type="ChEBI" id="CHEBI:15378"/>
        <dbReference type="ChEBI" id="CHEBI:15379"/>
        <dbReference type="ChEBI" id="CHEBI:18421"/>
        <dbReference type="ChEBI" id="CHEBI:57783"/>
        <dbReference type="ChEBI" id="CHEBI:58349"/>
    </reaction>
</comment>
<comment type="catalytic activity">
    <molecule>Isoform v2</molecule>
    <reaction evidence="6 8 11 12 14 15 16 17 19">
        <text>NADPH + 2 O2 = 2 superoxide + NADP(+) + H(+)</text>
        <dbReference type="Rhea" id="RHEA:63180"/>
        <dbReference type="ChEBI" id="CHEBI:15378"/>
        <dbReference type="ChEBI" id="CHEBI:15379"/>
        <dbReference type="ChEBI" id="CHEBI:18421"/>
        <dbReference type="ChEBI" id="CHEBI:57783"/>
        <dbReference type="ChEBI" id="CHEBI:58349"/>
    </reaction>
</comment>
<comment type="catalytic activity">
    <molecule>Isoform v1</molecule>
    <reaction evidence="13 16">
        <text>NADPH + 2 O2 = 2 superoxide + NADP(+) + H(+)</text>
        <dbReference type="Rhea" id="RHEA:63180"/>
        <dbReference type="ChEBI" id="CHEBI:15378"/>
        <dbReference type="ChEBI" id="CHEBI:15379"/>
        <dbReference type="ChEBI" id="CHEBI:18421"/>
        <dbReference type="ChEBI" id="CHEBI:57783"/>
        <dbReference type="ChEBI" id="CHEBI:58349"/>
    </reaction>
</comment>
<comment type="catalytic activity">
    <molecule>Isoform v5</molecule>
    <reaction evidence="11 19">
        <text>NADPH + 2 O2 = 2 superoxide + NADP(+) + H(+)</text>
        <dbReference type="Rhea" id="RHEA:63180"/>
        <dbReference type="ChEBI" id="CHEBI:15378"/>
        <dbReference type="ChEBI" id="CHEBI:15379"/>
        <dbReference type="ChEBI" id="CHEBI:18421"/>
        <dbReference type="ChEBI" id="CHEBI:57783"/>
        <dbReference type="ChEBI" id="CHEBI:58349"/>
    </reaction>
</comment>
<comment type="cofactor">
    <molecule>Isoform v2</molecule>
    <cofactor evidence="8">
        <name>FAD</name>
        <dbReference type="ChEBI" id="CHEBI:57692"/>
    </cofactor>
</comment>
<comment type="cofactor">
    <cofactor evidence="8">
        <name>Mg(2+)</name>
        <dbReference type="ChEBI" id="CHEBI:18420"/>
    </cofactor>
</comment>
<comment type="activity regulation">
    <molecule>Isoform v2</molecule>
    <text evidence="8 12 19">Activated by calcium which induces conformational changes and interaction between the N-terminal regulatory region and the C-terminal catalytic region. Inhibited by diphenylene iodonium.</text>
</comment>
<comment type="biophysicochemical properties">
    <molecule>Isoform v2</molecule>
    <kinetics>
        <KM evidence="8">1.06 uM for calcium</KM>
    </kinetics>
</comment>
<comment type="subunit">
    <molecule>Isoform v1</molecule>
    <text evidence="13">Homooligomer.</text>
</comment>
<comment type="interaction">
    <interactant intactId="EBI-7305642">
        <id>Q96PH1-4</id>
    </interactant>
    <interactant intactId="EBI-397403">
        <id>P62157</id>
        <label>CALM</label>
    </interactant>
    <organismsDiffer>true</organismsDiffer>
    <experiments>3</experiments>
</comment>
<comment type="subcellular location">
    <molecule>Isoform v2</molecule>
    <subcellularLocation>
        <location evidence="11 12">Endoplasmic reticulum</location>
    </subcellularLocation>
    <subcellularLocation>
        <location evidence="12 19">Cell membrane</location>
        <topology evidence="1">Multi-pass membrane protein</topology>
    </subcellularLocation>
    <text evidence="19">Calcium-sensitive association and dissociation between the N- and C-terminal domains appears to facilitate its localization to the cell membrane.</text>
</comment>
<comment type="subcellular location">
    <molecule>Isoform v5</molecule>
    <subcellularLocation>
        <location evidence="11">Endoplasmic reticulum</location>
    </subcellularLocation>
</comment>
<comment type="alternative products">
    <event type="alternative splicing"/>
    <isoform>
        <id>Q96PH1-1</id>
        <name>v3</name>
        <name>NOX5gamma</name>
        <sequence type="displayed"/>
    </isoform>
    <isoform>
        <id>Q96PH1-3</id>
        <name>v1</name>
        <name>NOX5alpha</name>
        <sequence type="described" ref="VSP_017328"/>
    </isoform>
    <isoform>
        <id>Q96PH1-4</id>
        <name>v2</name>
        <name>NOX5beta</name>
        <sequence type="described" ref="VSP_017327 VSP_017328"/>
    </isoform>
    <isoform>
        <id>Q96PH1-2</id>
        <name>v4</name>
        <name>NOX5delta</name>
        <sequence type="described" ref="VSP_017327"/>
    </isoform>
    <isoform>
        <id>Q96PH1-5</id>
        <name>v5</name>
        <name>NOX5epsilon</name>
        <name>NOX5S</name>
        <sequence type="described" ref="VSP_017326"/>
    </isoform>
    <isoform>
        <id>Q96PH1-6</id>
        <name>v6</name>
        <name>NOX5zeta</name>
        <sequence type="described" ref="VSP_041619 VSP_017328"/>
    </isoform>
</comment>
<comment type="tissue specificity">
    <text evidence="5 6 7 9 10">Mainly expressed in pachytene spermatocytes of testis and in lymphocyte-rich areas of spleen and lymph nodes. Also detected in ovary, placenta, pancreas, cardiac fibroblasts. Expressed in B-cells and prostate malignant cells.</text>
</comment>
<comment type="tissue specificity">
    <molecule>Isoform v1</molecule>
    <text evidence="6 11 16">Expressed in spleen (PubMed:11483596). Expressed in endothelial cells, pulmonary artery smooth muscle cells and epithelial colorectal adenocarcinoma cells (PubMed:17275676, PubMed:22427510).</text>
</comment>
<comment type="tissue specificity">
    <molecule>Isoform v2</molecule>
    <text evidence="6 11 16">Expressed in microvascular endothelial cells (at protein level) (PubMed:17275676). Expressed in testis (PubMed:11483596). Expressed in endothelial cells and pulmonary artery smooth muscle cells (PubMed:17275676, PubMed:22427510).</text>
</comment>
<comment type="tissue specificity">
    <molecule>Isoform v3</molecule>
    <text evidence="11">Expressed in pulmonary artery smooth muscle cells and epithelial colorectal adenocarcinoma cells.</text>
</comment>
<comment type="tissue specificity">
    <molecule>Isoform v4</molecule>
    <text evidence="11">Expressed in endothelial cells and pulmonary artery smooth muscle cells.</text>
</comment>
<comment type="tissue specificity">
    <molecule>Isoform v5</molecule>
    <text evidence="11">Expressed in microvascular endothelial cells (at protein level).</text>
</comment>
<comment type="developmental stage">
    <text evidence="5">Expressed in fetal tissues.</text>
</comment>
<comment type="induction">
    <text evidence="9">Down-regulated by TGFB1.</text>
</comment>
<comment type="domain">
    <molecule>Isoform v2</molecule>
    <text evidence="18">The C-lobe of the N-terminal calmodulin-like regulatory EF-domain acquires a folded and ordered structure upon calcium binding, and as a consequence, it is able to bind the C-terminal catalytic dehydrogenase domain, triggering enzyme activation.</text>
</comment>
<comment type="domain">
    <molecule>Isoform v1</molecule>
    <text evidence="13">The C-terminal catalytic dehydrogenase domain mediates its homooligomerization.</text>
</comment>
<comment type="domain">
    <molecule>Isoform v3</molecule>
    <text evidence="27">Absence of enzyme activity may be because the third EF-hand domain is interrupted by an insert.</text>
</comment>
<comment type="domain">
    <molecule>Isoform v4</molecule>
    <text evidence="27">Absence of enzyme activity may be because the third EF-hand domain is interrupted by an insert.</text>
</comment>
<comment type="domain">
    <molecule>Isoform v5</molecule>
    <text evidence="27">Absence of enzyme activity may be due to absence of EF-hand domains.</text>
</comment>
<comment type="PTM">
    <molecule>Isoform v2</molecule>
    <text evidence="14 17">Phosphorylation at Ser-475 by CaMK2 and at Ser-490, Thr-494 and Ser-498 by PKC/PRKCA positively regulates its catalytic activity.</text>
</comment>
<comment type="PTM">
    <molecule>Isoform v2</molecule>
    <text evidence="15">S-nitrosylation in response to nitric oxide inhibits its catalytic activity.</text>
</comment>
<comment type="caution">
    <molecule>Isoform v2</molecule>
    <text evidence="25">This isoform was proposed to act as a calcium-dependent proton channel to compensate charge and pH alterations due to electron export; however the channel activity seems to lack strong experimental evidences.</text>
</comment>
<comment type="sequence caution" evidence="24">
    <conflict type="erroneous initiation">
        <sequence resource="EMBL-CDS" id="AAG33638"/>
    </conflict>
    <text>Truncated N-terminus.</text>
</comment>
<comment type="sequence caution" evidence="24">
    <conflict type="erroneous initiation">
        <sequence resource="EMBL-CDS" id="BAB15319"/>
    </conflict>
    <text>Truncated N-terminus.</text>
</comment>
<comment type="sequence caution" evidence="24">
    <conflict type="erroneous initiation">
        <sequence resource="EMBL-CDS" id="BAB84897"/>
    </conflict>
    <text>Extended N-terminus.</text>
</comment>